<evidence type="ECO:0000255" key="1">
    <source>
        <dbReference type="HAMAP-Rule" id="MF_01323"/>
    </source>
</evidence>
<keyword id="KW-0150">Chloroplast</keyword>
<keyword id="KW-0240">DNA-directed RNA polymerase</keyword>
<keyword id="KW-0460">Magnesium</keyword>
<keyword id="KW-0479">Metal-binding</keyword>
<keyword id="KW-0548">Nucleotidyltransferase</keyword>
<keyword id="KW-0934">Plastid</keyword>
<keyword id="KW-0804">Transcription</keyword>
<keyword id="KW-0808">Transferase</keyword>
<keyword id="KW-0862">Zinc</keyword>
<feature type="chain" id="PRO_0000353481" description="DNA-directed RNA polymerase subunit beta'">
    <location>
        <begin position="1"/>
        <end position="688"/>
    </location>
</feature>
<feature type="binding site" evidence="1">
    <location>
        <position position="69"/>
    </location>
    <ligand>
        <name>Zn(2+)</name>
        <dbReference type="ChEBI" id="CHEBI:29105"/>
    </ligand>
</feature>
<feature type="binding site" evidence="1">
    <location>
        <position position="71"/>
    </location>
    <ligand>
        <name>Zn(2+)</name>
        <dbReference type="ChEBI" id="CHEBI:29105"/>
    </ligand>
</feature>
<feature type="binding site" evidence="1">
    <location>
        <position position="87"/>
    </location>
    <ligand>
        <name>Zn(2+)</name>
        <dbReference type="ChEBI" id="CHEBI:29105"/>
    </ligand>
</feature>
<feature type="binding site" evidence="1">
    <location>
        <position position="90"/>
    </location>
    <ligand>
        <name>Zn(2+)</name>
        <dbReference type="ChEBI" id="CHEBI:29105"/>
    </ligand>
</feature>
<feature type="binding site" evidence="1">
    <location>
        <position position="493"/>
    </location>
    <ligand>
        <name>Mg(2+)</name>
        <dbReference type="ChEBI" id="CHEBI:18420"/>
    </ligand>
</feature>
<feature type="binding site" evidence="1">
    <location>
        <position position="495"/>
    </location>
    <ligand>
        <name>Mg(2+)</name>
        <dbReference type="ChEBI" id="CHEBI:18420"/>
    </ligand>
</feature>
<feature type="binding site" evidence="1">
    <location>
        <position position="497"/>
    </location>
    <ligand>
        <name>Mg(2+)</name>
        <dbReference type="ChEBI" id="CHEBI:18420"/>
    </ligand>
</feature>
<accession>A6MMB3</accession>
<proteinExistence type="inferred from homology"/>
<sequence length="688" mass="79042">MIDRYKHQQLRIGSVSPQQITAWANKILPNGEIVGEVTKPYTFHYKTNKPEKDGLFCERIFGPIKSGICACGNYRVIGDEKEDPKFCEQCGVEFVDSRIRRYQMGYIKLACPVTHVWYLKRLPSYIANLLDKPLKELEGLVYCDVYPNFSFARPIAKKPTFLRLRGSFEYEIQSWKYSIPLFFTTQGFDTFRNREISTGAGAIREQLADPDLRTITDHSLVEWKELGEKGSTGNEWEDRKIGRRKDFLVRRLELAKNLIRTNVEPEWMVLRLLPVLPPELRPIIQIDGGKPMSSDINELYRRVIYRNNTLTDPLTTSRSTPGESVMCQEKLVQEAVDTLLDNGIRGQPMKDGHNKVYKSFSDVIEGKEGRFRETLLGKRVDYSGRSVIVVGPSLSLHRCGLPREIAIELFQTFVIRGLIRQHVASNIGIAKSKIREKEPIVWEILQEVMQGHPVLLNRAPTLHRLGIQAFQPILVEGRAICLHPLVRKGFNADFDGDQMAVHVPLSLEAQAEACLLMFSHMNLLSPTIGDPISVPTQDMLIGLYVLTIGNRRGICANRYNPCNCRNDNDQNETVDDNNYKYTKEKEPYFCSSYDALGAYRQKRIHLDSPLWLRWRLDQRVIASREVPIEVQYESSGTHHEIYGHYLIVRSVKKEILCIYIRTTVGHISFYREIEEAIQGFCRAYSYGT</sequence>
<comment type="function">
    <text evidence="1">DNA-dependent RNA polymerase catalyzes the transcription of DNA into RNA using the four ribonucleoside triphosphates as substrates.</text>
</comment>
<comment type="catalytic activity">
    <reaction evidence="1">
        <text>RNA(n) + a ribonucleoside 5'-triphosphate = RNA(n+1) + diphosphate</text>
        <dbReference type="Rhea" id="RHEA:21248"/>
        <dbReference type="Rhea" id="RHEA-COMP:14527"/>
        <dbReference type="Rhea" id="RHEA-COMP:17342"/>
        <dbReference type="ChEBI" id="CHEBI:33019"/>
        <dbReference type="ChEBI" id="CHEBI:61557"/>
        <dbReference type="ChEBI" id="CHEBI:140395"/>
        <dbReference type="EC" id="2.7.7.6"/>
    </reaction>
</comment>
<comment type="cofactor">
    <cofactor evidence="1">
        <name>Mg(2+)</name>
        <dbReference type="ChEBI" id="CHEBI:18420"/>
    </cofactor>
    <text evidence="1">Binds 1 Mg(2+) ion per subunit.</text>
</comment>
<comment type="cofactor">
    <cofactor evidence="1">
        <name>Zn(2+)</name>
        <dbReference type="ChEBI" id="CHEBI:29105"/>
    </cofactor>
    <text evidence="1">Binds 1 Zn(2+) ion per subunit.</text>
</comment>
<comment type="subunit">
    <text evidence="1">In plastids the minimal PEP RNA polymerase catalytic core is composed of four subunits: alpha, beta, beta', and beta''. When a (nuclear-encoded) sigma factor is associated with the core the holoenzyme is formed, which can initiate transcription.</text>
</comment>
<comment type="subcellular location">
    <subcellularLocation>
        <location evidence="1">Plastid</location>
        <location evidence="1">Chloroplast</location>
    </subcellularLocation>
</comment>
<comment type="similarity">
    <text evidence="1">Belongs to the RNA polymerase beta' chain family. RpoC1 subfamily.</text>
</comment>
<geneLocation type="chloroplast"/>
<protein>
    <recommendedName>
        <fullName evidence="1">DNA-directed RNA polymerase subunit beta'</fullName>
        <ecNumber evidence="1">2.7.7.6</ecNumber>
    </recommendedName>
    <alternativeName>
        <fullName evidence="1">PEP</fullName>
    </alternativeName>
    <alternativeName>
        <fullName evidence="1">Plastid-encoded RNA polymerase subunit beta'</fullName>
        <shortName evidence="1">RNA polymerase subunit beta'</shortName>
    </alternativeName>
</protein>
<organism>
    <name type="scientific">Chloranthus spicatus</name>
    <name type="common">Chulantree</name>
    <name type="synonym">Nigrina spicata</name>
    <dbReference type="NCBI Taxonomy" id="13006"/>
    <lineage>
        <taxon>Eukaryota</taxon>
        <taxon>Viridiplantae</taxon>
        <taxon>Streptophyta</taxon>
        <taxon>Embryophyta</taxon>
        <taxon>Tracheophyta</taxon>
        <taxon>Spermatophyta</taxon>
        <taxon>Magnoliopsida</taxon>
        <taxon>Chloranthales</taxon>
        <taxon>Chloranthaceae</taxon>
        <taxon>Chloranthus</taxon>
    </lineage>
</organism>
<reference key="1">
    <citation type="journal article" date="2007" name="Mol. Phylogenet. Evol.">
        <title>Phylogenetic and evolutionary implications of complete chloroplast genome sequences of four early-diverging angiosperms: Buxus (Buxaceae), Chloranthus (Chloranthaceae), Dioscorea (Dioscoreaceae), and Illicium (Schisandraceae).</title>
        <authorList>
            <person name="Hansen D.R."/>
            <person name="Dastidar S.G."/>
            <person name="Cai Z."/>
            <person name="Penaflor C."/>
            <person name="Kuehl J.V."/>
            <person name="Boore J.L."/>
            <person name="Jansen R.K."/>
        </authorList>
    </citation>
    <scope>NUCLEOTIDE SEQUENCE [LARGE SCALE GENOMIC DNA]</scope>
</reference>
<gene>
    <name evidence="1" type="primary">rpoC1</name>
</gene>
<dbReference type="EC" id="2.7.7.6" evidence="1"/>
<dbReference type="EMBL" id="EF380352">
    <property type="protein sequence ID" value="ABQ43251.1"/>
    <property type="molecule type" value="Genomic_DNA"/>
</dbReference>
<dbReference type="RefSeq" id="YP_001294089.1">
    <property type="nucleotide sequence ID" value="NC_009598.1"/>
</dbReference>
<dbReference type="SMR" id="A6MMB3"/>
<dbReference type="GeneID" id="5236499"/>
<dbReference type="GO" id="GO:0009507">
    <property type="term" value="C:chloroplast"/>
    <property type="evidence" value="ECO:0007669"/>
    <property type="project" value="UniProtKB-SubCell"/>
</dbReference>
<dbReference type="GO" id="GO:0000428">
    <property type="term" value="C:DNA-directed RNA polymerase complex"/>
    <property type="evidence" value="ECO:0007669"/>
    <property type="project" value="UniProtKB-KW"/>
</dbReference>
<dbReference type="GO" id="GO:0005739">
    <property type="term" value="C:mitochondrion"/>
    <property type="evidence" value="ECO:0007669"/>
    <property type="project" value="GOC"/>
</dbReference>
<dbReference type="GO" id="GO:0003677">
    <property type="term" value="F:DNA binding"/>
    <property type="evidence" value="ECO:0007669"/>
    <property type="project" value="UniProtKB-UniRule"/>
</dbReference>
<dbReference type="GO" id="GO:0003899">
    <property type="term" value="F:DNA-directed RNA polymerase activity"/>
    <property type="evidence" value="ECO:0007669"/>
    <property type="project" value="UniProtKB-UniRule"/>
</dbReference>
<dbReference type="GO" id="GO:0000287">
    <property type="term" value="F:magnesium ion binding"/>
    <property type="evidence" value="ECO:0007669"/>
    <property type="project" value="UniProtKB-UniRule"/>
</dbReference>
<dbReference type="GO" id="GO:0008270">
    <property type="term" value="F:zinc ion binding"/>
    <property type="evidence" value="ECO:0007669"/>
    <property type="project" value="UniProtKB-UniRule"/>
</dbReference>
<dbReference type="GO" id="GO:0006351">
    <property type="term" value="P:DNA-templated transcription"/>
    <property type="evidence" value="ECO:0007669"/>
    <property type="project" value="UniProtKB-UniRule"/>
</dbReference>
<dbReference type="FunFam" id="1.10.40.90:FF:000002">
    <property type="entry name" value="DNA-directed RNA polymerase subunit"/>
    <property type="match status" value="1"/>
</dbReference>
<dbReference type="FunFam" id="4.10.860.120:FF:000007">
    <property type="entry name" value="DNA-directed RNA polymerase subunit gamma"/>
    <property type="match status" value="1"/>
</dbReference>
<dbReference type="Gene3D" id="1.10.40.90">
    <property type="match status" value="1"/>
</dbReference>
<dbReference type="Gene3D" id="2.40.40.20">
    <property type="match status" value="1"/>
</dbReference>
<dbReference type="Gene3D" id="4.10.860.120">
    <property type="entry name" value="RNA polymerase II, clamp domain"/>
    <property type="match status" value="1"/>
</dbReference>
<dbReference type="Gene3D" id="1.10.274.100">
    <property type="entry name" value="RNA polymerase Rpb1, domain 3"/>
    <property type="match status" value="1"/>
</dbReference>
<dbReference type="HAMAP" id="MF_01323">
    <property type="entry name" value="RNApol_bact_RpoC1"/>
    <property type="match status" value="1"/>
</dbReference>
<dbReference type="InterPro" id="IPR045867">
    <property type="entry name" value="DNA-dir_RpoC_beta_prime"/>
</dbReference>
<dbReference type="InterPro" id="IPR000722">
    <property type="entry name" value="RNA_pol_asu"/>
</dbReference>
<dbReference type="InterPro" id="IPR006592">
    <property type="entry name" value="RNA_pol_N"/>
</dbReference>
<dbReference type="InterPro" id="IPR007080">
    <property type="entry name" value="RNA_pol_Rpb1_1"/>
</dbReference>
<dbReference type="InterPro" id="IPR042102">
    <property type="entry name" value="RNA_pol_Rpb1_3_sf"/>
</dbReference>
<dbReference type="InterPro" id="IPR044893">
    <property type="entry name" value="RNA_pol_Rpb1_clamp_domain"/>
</dbReference>
<dbReference type="InterPro" id="IPR034678">
    <property type="entry name" value="RNApol_RpoC1"/>
</dbReference>
<dbReference type="PANTHER" id="PTHR19376">
    <property type="entry name" value="DNA-DIRECTED RNA POLYMERASE"/>
    <property type="match status" value="1"/>
</dbReference>
<dbReference type="PANTHER" id="PTHR19376:SF54">
    <property type="entry name" value="DNA-DIRECTED RNA POLYMERASE SUBUNIT BETA"/>
    <property type="match status" value="1"/>
</dbReference>
<dbReference type="Pfam" id="PF04997">
    <property type="entry name" value="RNA_pol_Rpb1_1"/>
    <property type="match status" value="1"/>
</dbReference>
<dbReference type="Pfam" id="PF00623">
    <property type="entry name" value="RNA_pol_Rpb1_2"/>
    <property type="match status" value="2"/>
</dbReference>
<dbReference type="SMART" id="SM00663">
    <property type="entry name" value="RPOLA_N"/>
    <property type="match status" value="1"/>
</dbReference>
<dbReference type="SUPFAM" id="SSF64484">
    <property type="entry name" value="beta and beta-prime subunits of DNA dependent RNA-polymerase"/>
    <property type="match status" value="1"/>
</dbReference>
<name>RPOC1_CHLSC</name>